<name>PUR7_STRPN</name>
<keyword id="KW-0002">3D-structure</keyword>
<keyword id="KW-0067">ATP-binding</keyword>
<keyword id="KW-0436">Ligase</keyword>
<keyword id="KW-0547">Nucleotide-binding</keyword>
<keyword id="KW-0658">Purine biosynthesis</keyword>
<keyword id="KW-1185">Reference proteome</keyword>
<gene>
    <name type="primary">purC</name>
    <name type="ordered locus">SP_0044</name>
</gene>
<accession>Q07296</accession>
<proteinExistence type="evidence at protein level"/>
<comment type="catalytic activity">
    <reaction>
        <text>5-amino-1-(5-phospho-D-ribosyl)imidazole-4-carboxylate + L-aspartate + ATP = (2S)-2-[5-amino-1-(5-phospho-beta-D-ribosyl)imidazole-4-carboxamido]succinate + ADP + phosphate + 2 H(+)</text>
        <dbReference type="Rhea" id="RHEA:22628"/>
        <dbReference type="ChEBI" id="CHEBI:15378"/>
        <dbReference type="ChEBI" id="CHEBI:29991"/>
        <dbReference type="ChEBI" id="CHEBI:30616"/>
        <dbReference type="ChEBI" id="CHEBI:43474"/>
        <dbReference type="ChEBI" id="CHEBI:58443"/>
        <dbReference type="ChEBI" id="CHEBI:77657"/>
        <dbReference type="ChEBI" id="CHEBI:456216"/>
        <dbReference type="EC" id="6.3.2.6"/>
    </reaction>
</comment>
<comment type="pathway">
    <text>Purine metabolism; IMP biosynthesis via de novo pathway; 5-amino-1-(5-phospho-D-ribosyl)imidazole-4-carboxamide from 5-amino-1-(5-phospho-D-ribosyl)imidazole-4-carboxylate: step 1/2.</text>
</comment>
<comment type="similarity">
    <text evidence="1">Belongs to the SAICAR synthetase family.</text>
</comment>
<feature type="chain" id="PRO_0000100882" description="Phosphoribosylaminoimidazole-succinocarboxamide synthase">
    <location>
        <begin position="1"/>
        <end position="235"/>
    </location>
</feature>
<feature type="sequence conflict" description="In Ref. 1; AAA69512/AAA03540." evidence="1" ref="1">
    <original>V</original>
    <variation>A</variation>
    <location>
        <position position="62"/>
    </location>
</feature>
<feature type="sequence conflict" description="In Ref. 1; AAA69512/AAA03540." evidence="1" ref="1">
    <original>G</original>
    <variation>D</variation>
    <location>
        <position position="143"/>
    </location>
</feature>
<feature type="sequence conflict" description="In Ref. 1; AAA69512/AAA03540." evidence="1" ref="1">
    <original>T</original>
    <variation>A</variation>
    <location>
        <position position="154"/>
    </location>
</feature>
<feature type="strand" evidence="2">
    <location>
        <begin position="5"/>
        <end position="8"/>
    </location>
</feature>
<feature type="strand" evidence="2">
    <location>
        <begin position="10"/>
        <end position="16"/>
    </location>
</feature>
<feature type="strand" evidence="2">
    <location>
        <begin position="22"/>
        <end position="27"/>
    </location>
</feature>
<feature type="strand" evidence="2">
    <location>
        <begin position="29"/>
        <end position="32"/>
    </location>
</feature>
<feature type="strand" evidence="2">
    <location>
        <begin position="34"/>
        <end position="37"/>
    </location>
</feature>
<feature type="strand" evidence="2">
    <location>
        <begin position="39"/>
        <end position="41"/>
    </location>
</feature>
<feature type="helix" evidence="2">
    <location>
        <begin position="45"/>
        <end position="62"/>
    </location>
</feature>
<feature type="strand" evidence="2">
    <location>
        <begin position="67"/>
        <end position="72"/>
    </location>
</feature>
<feature type="strand" evidence="2">
    <location>
        <begin position="74"/>
        <end position="81"/>
    </location>
</feature>
<feature type="strand" evidence="2">
    <location>
        <begin position="87"/>
        <end position="95"/>
    </location>
</feature>
<feature type="helix" evidence="2">
    <location>
        <begin position="98"/>
        <end position="104"/>
    </location>
</feature>
<feature type="strand" evidence="2">
    <location>
        <begin position="111"/>
        <end position="121"/>
    </location>
</feature>
<feature type="helix" evidence="2">
    <location>
        <begin position="124"/>
        <end position="126"/>
    </location>
</feature>
<feature type="helix" evidence="2">
    <location>
        <begin position="133"/>
        <end position="138"/>
    </location>
</feature>
<feature type="helix" evidence="2">
    <location>
        <begin position="144"/>
        <end position="166"/>
    </location>
</feature>
<feature type="turn" evidence="2">
    <location>
        <begin position="167"/>
        <end position="169"/>
    </location>
</feature>
<feature type="strand" evidence="2">
    <location>
        <begin position="171"/>
        <end position="181"/>
    </location>
</feature>
<feature type="strand" evidence="2">
    <location>
        <begin position="187"/>
        <end position="191"/>
    </location>
</feature>
<feature type="helix" evidence="2">
    <location>
        <begin position="195"/>
        <end position="197"/>
    </location>
</feature>
<feature type="strand" evidence="2">
    <location>
        <begin position="198"/>
        <end position="201"/>
    </location>
</feature>
<feature type="helix" evidence="2">
    <location>
        <begin position="211"/>
        <end position="214"/>
    </location>
</feature>
<feature type="helix" evidence="2">
    <location>
        <begin position="220"/>
        <end position="231"/>
    </location>
</feature>
<organism>
    <name type="scientific">Streptococcus pneumoniae serotype 4 (strain ATCC BAA-334 / TIGR4)</name>
    <dbReference type="NCBI Taxonomy" id="170187"/>
    <lineage>
        <taxon>Bacteria</taxon>
        <taxon>Bacillati</taxon>
        <taxon>Bacillota</taxon>
        <taxon>Bacilli</taxon>
        <taxon>Lactobacillales</taxon>
        <taxon>Streptococcaceae</taxon>
        <taxon>Streptococcus</taxon>
    </lineage>
</organism>
<protein>
    <recommendedName>
        <fullName>Phosphoribosylaminoimidazole-succinocarboxamide synthase</fullName>
        <ecNumber>6.3.2.6</ecNumber>
    </recommendedName>
    <alternativeName>
        <fullName>SAICAR synthetase</fullName>
    </alternativeName>
</protein>
<reference key="1">
    <citation type="journal article" date="1993" name="J. Bacteriol.">
        <title>Identification of a purC gene from Streptococcus pneumoniae.</title>
        <authorList>
            <person name="Hui F.M."/>
            <person name="Morrison D.A."/>
        </authorList>
    </citation>
    <scope>NUCLEOTIDE SEQUENCE [GENOMIC DNA]</scope>
    <source>
        <strain>Rx / CP1200</strain>
    </source>
</reference>
<reference key="2">
    <citation type="journal article" date="2001" name="Science">
        <title>Complete genome sequence of a virulent isolate of Streptococcus pneumoniae.</title>
        <authorList>
            <person name="Tettelin H."/>
            <person name="Nelson K.E."/>
            <person name="Paulsen I.T."/>
            <person name="Eisen J.A."/>
            <person name="Read T.D."/>
            <person name="Peterson S.N."/>
            <person name="Heidelberg J.F."/>
            <person name="DeBoy R.T."/>
            <person name="Haft D.H."/>
            <person name="Dodson R.J."/>
            <person name="Durkin A.S."/>
            <person name="Gwinn M.L."/>
            <person name="Kolonay J.F."/>
            <person name="Nelson W.C."/>
            <person name="Peterson J.D."/>
            <person name="Umayam L.A."/>
            <person name="White O."/>
            <person name="Salzberg S.L."/>
            <person name="Lewis M.R."/>
            <person name="Radune D."/>
            <person name="Holtzapple E.K."/>
            <person name="Khouri H.M."/>
            <person name="Wolf A.M."/>
            <person name="Utterback T.R."/>
            <person name="Hansen C.L."/>
            <person name="McDonald L.A."/>
            <person name="Feldblyum T.V."/>
            <person name="Angiuoli S.V."/>
            <person name="Dickinson T."/>
            <person name="Hickey E.K."/>
            <person name="Holt I.E."/>
            <person name="Loftus B.J."/>
            <person name="Yang F."/>
            <person name="Smith H.O."/>
            <person name="Venter J.C."/>
            <person name="Dougherty B.A."/>
            <person name="Morrison D.A."/>
            <person name="Hollingshead S.K."/>
            <person name="Fraser C.M."/>
        </authorList>
    </citation>
    <scope>NUCLEOTIDE SEQUENCE [LARGE SCALE GENOMIC DNA]</scope>
    <source>
        <strain>ATCC BAA-334 / TIGR4</strain>
    </source>
</reference>
<reference key="3">
    <citation type="journal article" date="1995" name="Gene">
        <title>Competence for genetic transformation in Streptococcus pneumoniae: organization of a regulatory locus with homology to two lactococcin A secretion genes.</title>
        <authorList>
            <person name="Hui F.M."/>
            <person name="Zhou L."/>
            <person name="Morrison D.A."/>
        </authorList>
    </citation>
    <scope>NUCLEOTIDE SEQUENCE [GENOMIC DNA] OF 1-3</scope>
    <source>
        <strain>Rx / CP1200</strain>
    </source>
</reference>
<dbReference type="EC" id="6.3.2.6"/>
<dbReference type="EMBL" id="M36180">
    <property type="protein sequence ID" value="AAA69512.1"/>
    <property type="molecule type" value="Genomic_DNA"/>
</dbReference>
<dbReference type="EMBL" id="L15190">
    <property type="protein sequence ID" value="AAA03540.1"/>
    <property type="molecule type" value="Genomic_DNA"/>
</dbReference>
<dbReference type="EMBL" id="AE005672">
    <property type="protein sequence ID" value="AAK74233.1"/>
    <property type="molecule type" value="Genomic_DNA"/>
</dbReference>
<dbReference type="PIR" id="A36941">
    <property type="entry name" value="A36941"/>
</dbReference>
<dbReference type="PIR" id="H95004">
    <property type="entry name" value="H95004"/>
</dbReference>
<dbReference type="RefSeq" id="WP_000043309.1">
    <property type="nucleotide sequence ID" value="NZ_CP155539.1"/>
</dbReference>
<dbReference type="PDB" id="4FE2">
    <property type="method" value="X-ray"/>
    <property type="resolution" value="2.29 A"/>
    <property type="chains" value="A/B=1-235"/>
</dbReference>
<dbReference type="PDB" id="4FGR">
    <property type="method" value="X-ray"/>
    <property type="resolution" value="2.60 A"/>
    <property type="chains" value="A/B=1-235"/>
</dbReference>
<dbReference type="PDB" id="4NYE">
    <property type="method" value="X-ray"/>
    <property type="resolution" value="2.69 A"/>
    <property type="chains" value="A/B=1-235"/>
</dbReference>
<dbReference type="PDBsum" id="4FE2"/>
<dbReference type="PDBsum" id="4FGR"/>
<dbReference type="PDBsum" id="4NYE"/>
<dbReference type="SMR" id="Q07296"/>
<dbReference type="PaxDb" id="170187-SP_0044"/>
<dbReference type="EnsemblBacteria" id="AAK74233">
    <property type="protein sequence ID" value="AAK74233"/>
    <property type="gene ID" value="SP_0044"/>
</dbReference>
<dbReference type="KEGG" id="spn:SP_0044"/>
<dbReference type="eggNOG" id="COG0152">
    <property type="taxonomic scope" value="Bacteria"/>
</dbReference>
<dbReference type="PhylomeDB" id="Q07296"/>
<dbReference type="BRENDA" id="6.3.2.6">
    <property type="organism ID" value="1960"/>
</dbReference>
<dbReference type="UniPathway" id="UPA00074">
    <property type="reaction ID" value="UER00131"/>
</dbReference>
<dbReference type="EvolutionaryTrace" id="Q07296"/>
<dbReference type="Proteomes" id="UP000000585">
    <property type="component" value="Chromosome"/>
</dbReference>
<dbReference type="GO" id="GO:0005524">
    <property type="term" value="F:ATP binding"/>
    <property type="evidence" value="ECO:0007669"/>
    <property type="project" value="UniProtKB-KW"/>
</dbReference>
<dbReference type="GO" id="GO:0004639">
    <property type="term" value="F:phosphoribosylaminoimidazolesuccinocarboxamide synthase activity"/>
    <property type="evidence" value="ECO:0007669"/>
    <property type="project" value="UniProtKB-UniRule"/>
</dbReference>
<dbReference type="GO" id="GO:0006189">
    <property type="term" value="P:'de novo' IMP biosynthetic process"/>
    <property type="evidence" value="ECO:0007669"/>
    <property type="project" value="UniProtKB-UniRule"/>
</dbReference>
<dbReference type="GO" id="GO:0009236">
    <property type="term" value="P:cobalamin biosynthetic process"/>
    <property type="evidence" value="ECO:0007669"/>
    <property type="project" value="InterPro"/>
</dbReference>
<dbReference type="CDD" id="cd01415">
    <property type="entry name" value="SAICAR_synt_PurC"/>
    <property type="match status" value="1"/>
</dbReference>
<dbReference type="FunFam" id="3.30.200.20:FF:000189">
    <property type="entry name" value="Phosphoribosylaminoimidazole-succinocarboxamide synthase"/>
    <property type="match status" value="1"/>
</dbReference>
<dbReference type="FunFam" id="3.30.470.20:FF:000006">
    <property type="entry name" value="Phosphoribosylaminoimidazole-succinocarboxamide synthase"/>
    <property type="match status" value="1"/>
</dbReference>
<dbReference type="Gene3D" id="3.30.470.20">
    <property type="entry name" value="ATP-grasp fold, B domain"/>
    <property type="match status" value="1"/>
</dbReference>
<dbReference type="Gene3D" id="3.30.200.20">
    <property type="entry name" value="Phosphorylase Kinase, domain 1"/>
    <property type="match status" value="1"/>
</dbReference>
<dbReference type="HAMAP" id="MF_00137">
    <property type="entry name" value="SAICAR_synth"/>
    <property type="match status" value="1"/>
</dbReference>
<dbReference type="InterPro" id="IPR028923">
    <property type="entry name" value="SAICAR_synt/ADE2_N"/>
</dbReference>
<dbReference type="InterPro" id="IPR033934">
    <property type="entry name" value="SAICAR_synt_PurC"/>
</dbReference>
<dbReference type="InterPro" id="IPR001636">
    <property type="entry name" value="SAICAR_synth"/>
</dbReference>
<dbReference type="InterPro" id="IPR050089">
    <property type="entry name" value="SAICAR_synthetase"/>
</dbReference>
<dbReference type="InterPro" id="IPR018236">
    <property type="entry name" value="SAICAR_synthetase_CS"/>
</dbReference>
<dbReference type="NCBIfam" id="TIGR00081">
    <property type="entry name" value="purC"/>
    <property type="match status" value="1"/>
</dbReference>
<dbReference type="PANTHER" id="PTHR43599">
    <property type="entry name" value="MULTIFUNCTIONAL PROTEIN ADE2"/>
    <property type="match status" value="1"/>
</dbReference>
<dbReference type="PANTHER" id="PTHR43599:SF3">
    <property type="entry name" value="SI:DKEY-6E2.2"/>
    <property type="match status" value="1"/>
</dbReference>
<dbReference type="Pfam" id="PF01259">
    <property type="entry name" value="SAICAR_synt"/>
    <property type="match status" value="1"/>
</dbReference>
<dbReference type="SUPFAM" id="SSF56104">
    <property type="entry name" value="SAICAR synthase-like"/>
    <property type="match status" value="1"/>
</dbReference>
<dbReference type="PROSITE" id="PS01057">
    <property type="entry name" value="SAICAR_SYNTHETASE_1"/>
    <property type="match status" value="1"/>
</dbReference>
<dbReference type="PROSITE" id="PS01058">
    <property type="entry name" value="SAICAR_SYNTHETASE_2"/>
    <property type="match status" value="1"/>
</dbReference>
<evidence type="ECO:0000305" key="1"/>
<evidence type="ECO:0007829" key="2">
    <source>
        <dbReference type="PDB" id="4FE2"/>
    </source>
</evidence>
<sequence>MSKQLIYSGKAKDIYTTEDENLIISTYKDQATAFNGVKKEQIAGKGVLNNQISSFIFEKLNVAGVATHFVEKLSDTEQLNKKVKIIPLEVVLRNYTAGSFSKRFGVDEGIALETPIVEFYYKNDDLDDPFINDEHVKFLQIAGDQQIAYLKEETRRINELLKVWFAEIGLKLIDFKLEFGFDKDGKIILADEFSPDNCRLWDADGNHMDKDVFRRGLGELTDVYEIVWEKLQELK</sequence>